<organism>
    <name type="scientific">Escherichia coli O81 (strain ED1a)</name>
    <dbReference type="NCBI Taxonomy" id="585397"/>
    <lineage>
        <taxon>Bacteria</taxon>
        <taxon>Pseudomonadati</taxon>
        <taxon>Pseudomonadota</taxon>
        <taxon>Gammaproteobacteria</taxon>
        <taxon>Enterobacterales</taxon>
        <taxon>Enterobacteriaceae</taxon>
        <taxon>Escherichia</taxon>
    </lineage>
</organism>
<name>CRL_ECO81</name>
<feature type="chain" id="PRO_1000164425" description="Sigma factor-binding protein Crl">
    <location>
        <begin position="1"/>
        <end position="133"/>
    </location>
</feature>
<feature type="region of interest" description="Essential for activity" evidence="1">
    <location>
        <begin position="99"/>
        <end position="122"/>
    </location>
</feature>
<feature type="coiled-coil region" evidence="1">
    <location>
        <begin position="90"/>
        <end position="116"/>
    </location>
</feature>
<sequence length="133" mass="15600">MTLPSGHPKSRLVKKFTALGPYIREGKCEDNRFFFDCLAVCVNVKPAPEVREFWGWWMELEAQESRFTYSYQFGLFDKAGDWTSVQIKDAEVVERLEHTLREFHEKLRELLATLNLKLEPADDFRDEPVKLTA</sequence>
<proteinExistence type="inferred from homology"/>
<dbReference type="EMBL" id="CU928162">
    <property type="protein sequence ID" value="CAR06488.1"/>
    <property type="molecule type" value="Genomic_DNA"/>
</dbReference>
<dbReference type="RefSeq" id="WP_000174703.1">
    <property type="nucleotide sequence ID" value="NC_011745.1"/>
</dbReference>
<dbReference type="SMR" id="B7MQ76"/>
<dbReference type="KEGG" id="ecq:ECED1_0274"/>
<dbReference type="HOGENOM" id="CLU_136773_0_0_6"/>
<dbReference type="Proteomes" id="UP000000748">
    <property type="component" value="Chromosome"/>
</dbReference>
<dbReference type="GO" id="GO:0005737">
    <property type="term" value="C:cytoplasm"/>
    <property type="evidence" value="ECO:0007669"/>
    <property type="project" value="UniProtKB-SubCell"/>
</dbReference>
<dbReference type="GO" id="GO:0045893">
    <property type="term" value="P:positive regulation of DNA-templated transcription"/>
    <property type="evidence" value="ECO:0007669"/>
    <property type="project" value="UniProtKB-UniRule"/>
</dbReference>
<dbReference type="FunFam" id="3.30.310.230:FF:000001">
    <property type="entry name" value="Sigma factor-binding protein Crl"/>
    <property type="match status" value="1"/>
</dbReference>
<dbReference type="Gene3D" id="3.30.310.230">
    <property type="entry name" value="Sigma factor-binding protein Crl monomer"/>
    <property type="match status" value="1"/>
</dbReference>
<dbReference type="HAMAP" id="MF_01178">
    <property type="entry name" value="Crl"/>
    <property type="match status" value="1"/>
</dbReference>
<dbReference type="InterPro" id="IPR009986">
    <property type="entry name" value="Tscrpt_reg_Crl"/>
</dbReference>
<dbReference type="InterPro" id="IPR038208">
    <property type="entry name" value="Tscrpt_reg_Crl_sf"/>
</dbReference>
<dbReference type="NCBIfam" id="NF008217">
    <property type="entry name" value="PRK10984.1"/>
    <property type="match status" value="1"/>
</dbReference>
<dbReference type="Pfam" id="PF07417">
    <property type="entry name" value="Crl"/>
    <property type="match status" value="1"/>
</dbReference>
<keyword id="KW-0010">Activator</keyword>
<keyword id="KW-0175">Coiled coil</keyword>
<keyword id="KW-0963">Cytoplasm</keyword>
<keyword id="KW-0804">Transcription</keyword>
<keyword id="KW-0805">Transcription regulation</keyword>
<comment type="function">
    <text evidence="1">Binds to the sigma-S subunit of RNA polymerase, activating expression of sigma-S-regulated genes. Stimulates RNA polymerase holoenzyme formation and may bind to several other sigma factors, such as sigma-70 and sigma-32.</text>
</comment>
<comment type="subcellular location">
    <subcellularLocation>
        <location evidence="1">Cytoplasm</location>
    </subcellularLocation>
</comment>
<comment type="similarity">
    <text evidence="1">Belongs to the Crl family.</text>
</comment>
<protein>
    <recommendedName>
        <fullName evidence="1">Sigma factor-binding protein Crl</fullName>
    </recommendedName>
</protein>
<accession>B7MQ76</accession>
<reference key="1">
    <citation type="journal article" date="2009" name="PLoS Genet.">
        <title>Organised genome dynamics in the Escherichia coli species results in highly diverse adaptive paths.</title>
        <authorList>
            <person name="Touchon M."/>
            <person name="Hoede C."/>
            <person name="Tenaillon O."/>
            <person name="Barbe V."/>
            <person name="Baeriswyl S."/>
            <person name="Bidet P."/>
            <person name="Bingen E."/>
            <person name="Bonacorsi S."/>
            <person name="Bouchier C."/>
            <person name="Bouvet O."/>
            <person name="Calteau A."/>
            <person name="Chiapello H."/>
            <person name="Clermont O."/>
            <person name="Cruveiller S."/>
            <person name="Danchin A."/>
            <person name="Diard M."/>
            <person name="Dossat C."/>
            <person name="Karoui M.E."/>
            <person name="Frapy E."/>
            <person name="Garry L."/>
            <person name="Ghigo J.M."/>
            <person name="Gilles A.M."/>
            <person name="Johnson J."/>
            <person name="Le Bouguenec C."/>
            <person name="Lescat M."/>
            <person name="Mangenot S."/>
            <person name="Martinez-Jehanne V."/>
            <person name="Matic I."/>
            <person name="Nassif X."/>
            <person name="Oztas S."/>
            <person name="Petit M.A."/>
            <person name="Pichon C."/>
            <person name="Rouy Z."/>
            <person name="Ruf C.S."/>
            <person name="Schneider D."/>
            <person name="Tourret J."/>
            <person name="Vacherie B."/>
            <person name="Vallenet D."/>
            <person name="Medigue C."/>
            <person name="Rocha E.P.C."/>
            <person name="Denamur E."/>
        </authorList>
    </citation>
    <scope>NUCLEOTIDE SEQUENCE [LARGE SCALE GENOMIC DNA]</scope>
    <source>
        <strain>ED1a</strain>
    </source>
</reference>
<gene>
    <name evidence="1" type="primary">crl</name>
    <name type="ordered locus">ECED1_0274</name>
</gene>
<evidence type="ECO:0000255" key="1">
    <source>
        <dbReference type="HAMAP-Rule" id="MF_01178"/>
    </source>
</evidence>